<protein>
    <recommendedName>
        <fullName evidence="1">Argininosuccinate synthase</fullName>
        <ecNumber evidence="1">6.3.4.5</ecNumber>
    </recommendedName>
    <alternativeName>
        <fullName evidence="1">Citrulline--aspartate ligase</fullName>
    </alternativeName>
</protein>
<comment type="catalytic activity">
    <reaction evidence="1">
        <text>L-citrulline + L-aspartate + ATP = 2-(N(omega)-L-arginino)succinate + AMP + diphosphate + H(+)</text>
        <dbReference type="Rhea" id="RHEA:10932"/>
        <dbReference type="ChEBI" id="CHEBI:15378"/>
        <dbReference type="ChEBI" id="CHEBI:29991"/>
        <dbReference type="ChEBI" id="CHEBI:30616"/>
        <dbReference type="ChEBI" id="CHEBI:33019"/>
        <dbReference type="ChEBI" id="CHEBI:57472"/>
        <dbReference type="ChEBI" id="CHEBI:57743"/>
        <dbReference type="ChEBI" id="CHEBI:456215"/>
        <dbReference type="EC" id="6.3.4.5"/>
    </reaction>
</comment>
<comment type="pathway">
    <text evidence="1">Amino-acid biosynthesis; L-arginine biosynthesis; L-arginine from L-ornithine and carbamoyl phosphate: step 2/3.</text>
</comment>
<comment type="subunit">
    <text evidence="1">Homotetramer.</text>
</comment>
<comment type="subcellular location">
    <subcellularLocation>
        <location evidence="1">Cytoplasm</location>
    </subcellularLocation>
</comment>
<comment type="similarity">
    <text evidence="1">Belongs to the argininosuccinate synthase family. Type 1 subfamily.</text>
</comment>
<comment type="sequence caution" evidence="2">
    <conflict type="erroneous initiation">
        <sequence resource="EMBL-CDS" id="AAZ97802"/>
    </conflict>
</comment>
<reference key="1">
    <citation type="journal article" date="2006" name="J. Bacteriol.">
        <title>The genome sequence of the obligately chemolithoautotrophic, facultatively anaerobic bacterium Thiobacillus denitrificans.</title>
        <authorList>
            <person name="Beller H.R."/>
            <person name="Chain P.S."/>
            <person name="Letain T.E."/>
            <person name="Chakicherla A."/>
            <person name="Larimer F.W."/>
            <person name="Richardson P.M."/>
            <person name="Coleman M.A."/>
            <person name="Wood A.P."/>
            <person name="Kelly D.P."/>
        </authorList>
    </citation>
    <scope>NUCLEOTIDE SEQUENCE [LARGE SCALE GENOMIC DNA]</scope>
    <source>
        <strain>ATCC 25259 / T1</strain>
    </source>
</reference>
<accession>Q3SHT1</accession>
<proteinExistence type="inferred from homology"/>
<gene>
    <name evidence="1" type="primary">argG</name>
    <name type="ordered locus">Tbd_1849</name>
</gene>
<name>ASSY_THIDA</name>
<sequence length="409" mass="45869">MSDIKKVVLAYSGGLDTSVILKWLQDTYQCEVVTFTADLGQGEELEPARQKALQFGIKPEQIYIDDLREEFVRDFVFPMFRANTVYEGEYLLGTSIARPLIAKRLIEIVNATGADAICHGATGKGNDQVRFELGAYALKPDVKVIAPWREWDLLSREKLLAYAESHGIPIDMKHRQGGSPYSMDANLLHISYEGRHLEDPSAEAEEDMWRWTVSPEKAPDAAEYIELTYAKGDVVAIDGQQMPAHEVLAKLNELGGKHGIGRLDLVENRYVGMKSRGCYETPGGTILLKAHRAIESITLDREVAHLKDDLMPRYASLIYNGYWWAPERRALQVLIDHTQAHVNGTVRLKLYKGNVIVVGRDSKNDSLFDSTIATFEDDAGAYDQKDAGGFIKLNALRMRIAAKLDARRK</sequence>
<feature type="chain" id="PRO_0000263989" description="Argininosuccinate synthase">
    <location>
        <begin position="1"/>
        <end position="409"/>
    </location>
</feature>
<feature type="binding site" evidence="1">
    <location>
        <begin position="10"/>
        <end position="18"/>
    </location>
    <ligand>
        <name>ATP</name>
        <dbReference type="ChEBI" id="CHEBI:30616"/>
    </ligand>
</feature>
<feature type="binding site" evidence="1">
    <location>
        <position position="37"/>
    </location>
    <ligand>
        <name>ATP</name>
        <dbReference type="ChEBI" id="CHEBI:30616"/>
    </ligand>
</feature>
<feature type="binding site" evidence="1">
    <location>
        <position position="90"/>
    </location>
    <ligand>
        <name>L-citrulline</name>
        <dbReference type="ChEBI" id="CHEBI:57743"/>
    </ligand>
</feature>
<feature type="binding site" evidence="1">
    <location>
        <position position="95"/>
    </location>
    <ligand>
        <name>L-citrulline</name>
        <dbReference type="ChEBI" id="CHEBI:57743"/>
    </ligand>
</feature>
<feature type="binding site" evidence="1">
    <location>
        <position position="120"/>
    </location>
    <ligand>
        <name>ATP</name>
        <dbReference type="ChEBI" id="CHEBI:30616"/>
    </ligand>
</feature>
<feature type="binding site" evidence="1">
    <location>
        <position position="122"/>
    </location>
    <ligand>
        <name>L-aspartate</name>
        <dbReference type="ChEBI" id="CHEBI:29991"/>
    </ligand>
</feature>
<feature type="binding site" evidence="1">
    <location>
        <position position="126"/>
    </location>
    <ligand>
        <name>L-aspartate</name>
        <dbReference type="ChEBI" id="CHEBI:29991"/>
    </ligand>
</feature>
<feature type="binding site" evidence="1">
    <location>
        <position position="126"/>
    </location>
    <ligand>
        <name>L-citrulline</name>
        <dbReference type="ChEBI" id="CHEBI:57743"/>
    </ligand>
</feature>
<feature type="binding site" evidence="1">
    <location>
        <position position="127"/>
    </location>
    <ligand>
        <name>L-aspartate</name>
        <dbReference type="ChEBI" id="CHEBI:29991"/>
    </ligand>
</feature>
<feature type="binding site" evidence="1">
    <location>
        <position position="130"/>
    </location>
    <ligand>
        <name>L-citrulline</name>
        <dbReference type="ChEBI" id="CHEBI:57743"/>
    </ligand>
</feature>
<feature type="binding site" evidence="1">
    <location>
        <position position="182"/>
    </location>
    <ligand>
        <name>L-citrulline</name>
        <dbReference type="ChEBI" id="CHEBI:57743"/>
    </ligand>
</feature>
<feature type="binding site" evidence="1">
    <location>
        <position position="191"/>
    </location>
    <ligand>
        <name>L-citrulline</name>
        <dbReference type="ChEBI" id="CHEBI:57743"/>
    </ligand>
</feature>
<feature type="binding site" evidence="1">
    <location>
        <position position="267"/>
    </location>
    <ligand>
        <name>L-citrulline</name>
        <dbReference type="ChEBI" id="CHEBI:57743"/>
    </ligand>
</feature>
<feature type="binding site" evidence="1">
    <location>
        <position position="279"/>
    </location>
    <ligand>
        <name>L-citrulline</name>
        <dbReference type="ChEBI" id="CHEBI:57743"/>
    </ligand>
</feature>
<organism>
    <name type="scientific">Thiobacillus denitrificans (strain ATCC 25259 / T1)</name>
    <dbReference type="NCBI Taxonomy" id="292415"/>
    <lineage>
        <taxon>Bacteria</taxon>
        <taxon>Pseudomonadati</taxon>
        <taxon>Pseudomonadota</taxon>
        <taxon>Betaproteobacteria</taxon>
        <taxon>Nitrosomonadales</taxon>
        <taxon>Thiobacillaceae</taxon>
        <taxon>Thiobacillus</taxon>
    </lineage>
</organism>
<keyword id="KW-0028">Amino-acid biosynthesis</keyword>
<keyword id="KW-0055">Arginine biosynthesis</keyword>
<keyword id="KW-0067">ATP-binding</keyword>
<keyword id="KW-0963">Cytoplasm</keyword>
<keyword id="KW-0436">Ligase</keyword>
<keyword id="KW-0547">Nucleotide-binding</keyword>
<keyword id="KW-1185">Reference proteome</keyword>
<dbReference type="EC" id="6.3.4.5" evidence="1"/>
<dbReference type="EMBL" id="CP000116">
    <property type="protein sequence ID" value="AAZ97802.1"/>
    <property type="status" value="ALT_INIT"/>
    <property type="molecule type" value="Genomic_DNA"/>
</dbReference>
<dbReference type="RefSeq" id="WP_011312361.1">
    <property type="nucleotide sequence ID" value="NC_007404.1"/>
</dbReference>
<dbReference type="SMR" id="Q3SHT1"/>
<dbReference type="STRING" id="292415.Tbd_1849"/>
<dbReference type="KEGG" id="tbd:Tbd_1849"/>
<dbReference type="eggNOG" id="COG0137">
    <property type="taxonomic scope" value="Bacteria"/>
</dbReference>
<dbReference type="HOGENOM" id="CLU_032784_4_2_4"/>
<dbReference type="OrthoDB" id="9801641at2"/>
<dbReference type="UniPathway" id="UPA00068">
    <property type="reaction ID" value="UER00113"/>
</dbReference>
<dbReference type="Proteomes" id="UP000008291">
    <property type="component" value="Chromosome"/>
</dbReference>
<dbReference type="GO" id="GO:0005737">
    <property type="term" value="C:cytoplasm"/>
    <property type="evidence" value="ECO:0007669"/>
    <property type="project" value="UniProtKB-SubCell"/>
</dbReference>
<dbReference type="GO" id="GO:0004055">
    <property type="term" value="F:argininosuccinate synthase activity"/>
    <property type="evidence" value="ECO:0007669"/>
    <property type="project" value="UniProtKB-UniRule"/>
</dbReference>
<dbReference type="GO" id="GO:0005524">
    <property type="term" value="F:ATP binding"/>
    <property type="evidence" value="ECO:0007669"/>
    <property type="project" value="UniProtKB-UniRule"/>
</dbReference>
<dbReference type="GO" id="GO:0000053">
    <property type="term" value="P:argininosuccinate metabolic process"/>
    <property type="evidence" value="ECO:0007669"/>
    <property type="project" value="TreeGrafter"/>
</dbReference>
<dbReference type="GO" id="GO:0006526">
    <property type="term" value="P:L-arginine biosynthetic process"/>
    <property type="evidence" value="ECO:0007669"/>
    <property type="project" value="UniProtKB-UniRule"/>
</dbReference>
<dbReference type="GO" id="GO:0000050">
    <property type="term" value="P:urea cycle"/>
    <property type="evidence" value="ECO:0007669"/>
    <property type="project" value="TreeGrafter"/>
</dbReference>
<dbReference type="CDD" id="cd01999">
    <property type="entry name" value="ASS"/>
    <property type="match status" value="1"/>
</dbReference>
<dbReference type="FunFam" id="1.20.5.470:FF:000001">
    <property type="entry name" value="Argininosuccinate synthase"/>
    <property type="match status" value="1"/>
</dbReference>
<dbReference type="FunFam" id="3.40.50.620:FF:000019">
    <property type="entry name" value="Argininosuccinate synthase"/>
    <property type="match status" value="1"/>
</dbReference>
<dbReference type="FunFam" id="3.90.1260.10:FF:000007">
    <property type="entry name" value="Argininosuccinate synthase"/>
    <property type="match status" value="1"/>
</dbReference>
<dbReference type="Gene3D" id="3.90.1260.10">
    <property type="entry name" value="Argininosuccinate synthetase, chain A, domain 2"/>
    <property type="match status" value="1"/>
</dbReference>
<dbReference type="Gene3D" id="3.40.50.620">
    <property type="entry name" value="HUPs"/>
    <property type="match status" value="1"/>
</dbReference>
<dbReference type="Gene3D" id="1.20.5.470">
    <property type="entry name" value="Single helix bin"/>
    <property type="match status" value="1"/>
</dbReference>
<dbReference type="HAMAP" id="MF_00005">
    <property type="entry name" value="Arg_succ_synth_type1"/>
    <property type="match status" value="1"/>
</dbReference>
<dbReference type="InterPro" id="IPR048268">
    <property type="entry name" value="Arginosuc_syn_C"/>
</dbReference>
<dbReference type="InterPro" id="IPR048267">
    <property type="entry name" value="Arginosuc_syn_N"/>
</dbReference>
<dbReference type="InterPro" id="IPR001518">
    <property type="entry name" value="Arginosuc_synth"/>
</dbReference>
<dbReference type="InterPro" id="IPR018223">
    <property type="entry name" value="Arginosuc_synth_CS"/>
</dbReference>
<dbReference type="InterPro" id="IPR023434">
    <property type="entry name" value="Arginosuc_synth_type_1_subfam"/>
</dbReference>
<dbReference type="InterPro" id="IPR024074">
    <property type="entry name" value="AS_cat/multimer_dom_body"/>
</dbReference>
<dbReference type="InterPro" id="IPR014729">
    <property type="entry name" value="Rossmann-like_a/b/a_fold"/>
</dbReference>
<dbReference type="NCBIfam" id="TIGR00032">
    <property type="entry name" value="argG"/>
    <property type="match status" value="1"/>
</dbReference>
<dbReference type="NCBIfam" id="NF001770">
    <property type="entry name" value="PRK00509.1"/>
    <property type="match status" value="1"/>
</dbReference>
<dbReference type="PANTHER" id="PTHR11587">
    <property type="entry name" value="ARGININOSUCCINATE SYNTHASE"/>
    <property type="match status" value="1"/>
</dbReference>
<dbReference type="PANTHER" id="PTHR11587:SF2">
    <property type="entry name" value="ARGININOSUCCINATE SYNTHASE"/>
    <property type="match status" value="1"/>
</dbReference>
<dbReference type="Pfam" id="PF20979">
    <property type="entry name" value="Arginosuc_syn_C"/>
    <property type="match status" value="1"/>
</dbReference>
<dbReference type="Pfam" id="PF00764">
    <property type="entry name" value="Arginosuc_synth"/>
    <property type="match status" value="1"/>
</dbReference>
<dbReference type="SUPFAM" id="SSF52402">
    <property type="entry name" value="Adenine nucleotide alpha hydrolases-like"/>
    <property type="match status" value="1"/>
</dbReference>
<dbReference type="SUPFAM" id="SSF69864">
    <property type="entry name" value="Argininosuccinate synthetase, C-terminal domain"/>
    <property type="match status" value="1"/>
</dbReference>
<dbReference type="PROSITE" id="PS00564">
    <property type="entry name" value="ARGININOSUCCIN_SYN_1"/>
    <property type="match status" value="1"/>
</dbReference>
<dbReference type="PROSITE" id="PS00565">
    <property type="entry name" value="ARGININOSUCCIN_SYN_2"/>
    <property type="match status" value="1"/>
</dbReference>
<evidence type="ECO:0000255" key="1">
    <source>
        <dbReference type="HAMAP-Rule" id="MF_00005"/>
    </source>
</evidence>
<evidence type="ECO:0000305" key="2"/>